<organism>
    <name type="scientific">Oryctolagus cuniculus</name>
    <name type="common">Rabbit</name>
    <dbReference type="NCBI Taxonomy" id="9986"/>
    <lineage>
        <taxon>Eukaryota</taxon>
        <taxon>Metazoa</taxon>
        <taxon>Chordata</taxon>
        <taxon>Craniata</taxon>
        <taxon>Vertebrata</taxon>
        <taxon>Euteleostomi</taxon>
        <taxon>Mammalia</taxon>
        <taxon>Eutheria</taxon>
        <taxon>Euarchontoglires</taxon>
        <taxon>Glires</taxon>
        <taxon>Lagomorpha</taxon>
        <taxon>Leporidae</taxon>
        <taxon>Oryctolagus</taxon>
    </lineage>
</organism>
<gene>
    <name type="primary">NXPE1</name>
    <name type="synonym">FAM55A</name>
</gene>
<name>NXPE1_RABIT</name>
<sequence>MLHKYLKLICLLAAICVLCIISQNSTKIWGALKLPNSHYYSNTSMISSIPKMSVSPVKSLTETELRVKEILEKLDRLIPPRPFTHVNTTTSATHSTATILNPQDKYCVGDQLDILLEVRDYLGHQKEYGGDFLRARMFSPALKAGASGKVTDFNNGTYLVSFTLFWEGQVSLSVLLIHPSEGASALWRARNQGYDRIIFKGQFVNGTSHVFTECSLTLNSNTEECKYLNGRDQDVFYCMKPQHMPCEALTHVTSRNRDISYLTSKEKNLFHRSKVGVEIMKNQHIDVSQCNKSKEVKEKCQIGMKIPVPGGYTLQGRWLTTFCNQIQLDTAKISGCLKGKLIYLMGDSTLRQWIYYLPKVMKTLKFFDLHETGNFKKHLLLDAEKHTQIQWKKHSHPFVTYQLFSVIDHGYIPQEIDRLIGDKDTVIVITFGQHFRPFPIDIFIRRAISVRQAIERLFLRSPATKVIVKTENIREMHIEAERFGDFHGYIQYLTLKDIFKDLNVGVVDAWDMTIAYGTNNVHPPDQVIGNQINMFLNYIC</sequence>
<dbReference type="EMBL" id="Z12840">
    <property type="protein sequence ID" value="CAA78302.1"/>
    <property type="molecule type" value="mRNA"/>
</dbReference>
<dbReference type="PIR" id="B45665">
    <property type="entry name" value="B45665"/>
</dbReference>
<dbReference type="RefSeq" id="NP_001095182.1">
    <property type="nucleotide sequence ID" value="NM_001101712.1"/>
</dbReference>
<dbReference type="STRING" id="9986.ENSOCUP00000020329"/>
<dbReference type="GlyCosmos" id="Q05004">
    <property type="glycosylation" value="6 sites, No reported glycans"/>
</dbReference>
<dbReference type="PaxDb" id="9986-ENSOCUP00000020329"/>
<dbReference type="GeneID" id="100009342"/>
<dbReference type="KEGG" id="ocu:100009342"/>
<dbReference type="CTD" id="120400"/>
<dbReference type="eggNOG" id="ENOG502QW5F">
    <property type="taxonomic scope" value="Eukaryota"/>
</dbReference>
<dbReference type="InParanoid" id="Q05004"/>
<dbReference type="OrthoDB" id="2112051at2759"/>
<dbReference type="Proteomes" id="UP000001811">
    <property type="component" value="Unplaced"/>
</dbReference>
<dbReference type="GO" id="GO:0005576">
    <property type="term" value="C:extracellular region"/>
    <property type="evidence" value="ECO:0007669"/>
    <property type="project" value="UniProtKB-SubCell"/>
</dbReference>
<dbReference type="Gene3D" id="2.60.40.10">
    <property type="entry name" value="Immunoglobulins"/>
    <property type="match status" value="1"/>
</dbReference>
<dbReference type="InterPro" id="IPR013783">
    <property type="entry name" value="Ig-like_fold"/>
</dbReference>
<dbReference type="InterPro" id="IPR014756">
    <property type="entry name" value="Ig_E-set"/>
</dbReference>
<dbReference type="InterPro" id="IPR057106">
    <property type="entry name" value="NXPE4_C"/>
</dbReference>
<dbReference type="InterPro" id="IPR026845">
    <property type="entry name" value="NXPH/NXPE"/>
</dbReference>
<dbReference type="PANTHER" id="PTHR16165">
    <property type="entry name" value="NXPE FAMILY MEMBER"/>
    <property type="match status" value="1"/>
</dbReference>
<dbReference type="PANTHER" id="PTHR16165:SF3">
    <property type="entry name" value="NXPE FAMILY MEMBER 1"/>
    <property type="match status" value="1"/>
</dbReference>
<dbReference type="Pfam" id="PF06312">
    <property type="entry name" value="Neurexophilin"/>
    <property type="match status" value="1"/>
</dbReference>
<dbReference type="Pfam" id="PF24536">
    <property type="entry name" value="NXPE4_C"/>
    <property type="match status" value="1"/>
</dbReference>
<dbReference type="SUPFAM" id="SSF81296">
    <property type="entry name" value="E set domains"/>
    <property type="match status" value="1"/>
</dbReference>
<accession>Q05004</accession>
<keyword id="KW-0325">Glycoprotein</keyword>
<keyword id="KW-1185">Reference proteome</keyword>
<keyword id="KW-0964">Secreted</keyword>
<keyword id="KW-0732">Signal</keyword>
<protein>
    <recommendedName>
        <fullName>NXPE family member 1</fullName>
    </recommendedName>
    <alternativeName>
        <fullName>Brush border protein AdRab-A</fullName>
    </alternativeName>
    <alternativeName>
        <fullName>Protein FAM55A</fullName>
    </alternativeName>
</protein>
<proteinExistence type="evidence at transcript level"/>
<feature type="signal peptide" evidence="1">
    <location>
        <begin position="1"/>
        <end position="22"/>
    </location>
</feature>
<feature type="chain" id="PRO_0000020802" description="NXPE family member 1">
    <location>
        <begin position="23"/>
        <end position="540"/>
    </location>
</feature>
<feature type="glycosylation site" description="N-linked (GlcNAc...) asparagine" evidence="1">
    <location>
        <position position="24"/>
    </location>
</feature>
<feature type="glycosylation site" description="N-linked (GlcNAc...) asparagine" evidence="1">
    <location>
        <position position="42"/>
    </location>
</feature>
<feature type="glycosylation site" description="N-linked (GlcNAc...) asparagine" evidence="1">
    <location>
        <position position="87"/>
    </location>
</feature>
<feature type="glycosylation site" description="N-linked (GlcNAc...) asparagine" evidence="1">
    <location>
        <position position="155"/>
    </location>
</feature>
<feature type="glycosylation site" description="N-linked (GlcNAc...) asparagine" evidence="1">
    <location>
        <position position="205"/>
    </location>
</feature>
<feature type="glycosylation site" description="N-linked (GlcNAc...) asparagine" evidence="1">
    <location>
        <position position="291"/>
    </location>
</feature>
<reference key="1">
    <citation type="journal article" date="1993" name="J. Biol. Chem.">
        <title>Messenger RNAs expressed in intestine of adult but not baby rabbits. Isolation of cognate cDNAs and characterization of a novel brush border protein with esterase and phospholipase activity.</title>
        <authorList>
            <person name="Boll W."/>
            <person name="Schmid-Chanda T."/>
            <person name="Semenza G."/>
            <person name="Mantei N."/>
        </authorList>
    </citation>
    <scope>NUCLEOTIDE SEQUENCE [MRNA]</scope>
    <scope>TISSUE SPECIFICITY</scope>
    <scope>DEVELOPMENTAL STAGE</scope>
    <source>
        <tissue>Intestine</tissue>
    </source>
</reference>
<evidence type="ECO:0000255" key="1"/>
<evidence type="ECO:0000269" key="2">
    <source>
    </source>
</evidence>
<evidence type="ECO:0000305" key="3"/>
<comment type="subcellular location">
    <subcellularLocation>
        <location>Secreted</location>
    </subcellularLocation>
</comment>
<comment type="tissue specificity">
    <text evidence="2">Intestine, and to a lesser extent in kidney.</text>
</comment>
<comment type="developmental stage">
    <text evidence="2">Expressed in the intestine of adult but not baby rabbits.</text>
</comment>
<comment type="similarity">
    <text evidence="3">Belongs to the NXPE family.</text>
</comment>